<keyword id="KW-0963">Cytoplasm</keyword>
<keyword id="KW-1185">Reference proteome</keyword>
<keyword id="KW-0690">Ribosome biogenesis</keyword>
<feature type="chain" id="PRO_0000102609" description="Ribosome-binding factor A">
    <location>
        <begin position="1"/>
        <end position="138"/>
    </location>
</feature>
<feature type="region of interest" description="Disordered" evidence="2">
    <location>
        <begin position="119"/>
        <end position="138"/>
    </location>
</feature>
<reference key="1">
    <citation type="journal article" date="2001" name="Science">
        <title>The genome of the natural genetic engineer Agrobacterium tumefaciens C58.</title>
        <authorList>
            <person name="Wood D.W."/>
            <person name="Setubal J.C."/>
            <person name="Kaul R."/>
            <person name="Monks D.E."/>
            <person name="Kitajima J.P."/>
            <person name="Okura V.K."/>
            <person name="Zhou Y."/>
            <person name="Chen L."/>
            <person name="Wood G.E."/>
            <person name="Almeida N.F. Jr."/>
            <person name="Woo L."/>
            <person name="Chen Y."/>
            <person name="Paulsen I.T."/>
            <person name="Eisen J.A."/>
            <person name="Karp P.D."/>
            <person name="Bovee D. Sr."/>
            <person name="Chapman P."/>
            <person name="Clendenning J."/>
            <person name="Deatherage G."/>
            <person name="Gillet W."/>
            <person name="Grant C."/>
            <person name="Kutyavin T."/>
            <person name="Levy R."/>
            <person name="Li M.-J."/>
            <person name="McClelland E."/>
            <person name="Palmieri A."/>
            <person name="Raymond C."/>
            <person name="Rouse G."/>
            <person name="Saenphimmachak C."/>
            <person name="Wu Z."/>
            <person name="Romero P."/>
            <person name="Gordon D."/>
            <person name="Zhang S."/>
            <person name="Yoo H."/>
            <person name="Tao Y."/>
            <person name="Biddle P."/>
            <person name="Jung M."/>
            <person name="Krespan W."/>
            <person name="Perry M."/>
            <person name="Gordon-Kamm B."/>
            <person name="Liao L."/>
            <person name="Kim S."/>
            <person name="Hendrick C."/>
            <person name="Zhao Z.-Y."/>
            <person name="Dolan M."/>
            <person name="Chumley F."/>
            <person name="Tingey S.V."/>
            <person name="Tomb J.-F."/>
            <person name="Gordon M.P."/>
            <person name="Olson M.V."/>
            <person name="Nester E.W."/>
        </authorList>
    </citation>
    <scope>NUCLEOTIDE SEQUENCE [LARGE SCALE GENOMIC DNA]</scope>
    <source>
        <strain>C58 / ATCC 33970</strain>
    </source>
</reference>
<reference key="2">
    <citation type="journal article" date="2001" name="Science">
        <title>Genome sequence of the plant pathogen and biotechnology agent Agrobacterium tumefaciens C58.</title>
        <authorList>
            <person name="Goodner B."/>
            <person name="Hinkle G."/>
            <person name="Gattung S."/>
            <person name="Miller N."/>
            <person name="Blanchard M."/>
            <person name="Qurollo B."/>
            <person name="Goldman B.S."/>
            <person name="Cao Y."/>
            <person name="Askenazi M."/>
            <person name="Halling C."/>
            <person name="Mullin L."/>
            <person name="Houmiel K."/>
            <person name="Gordon J."/>
            <person name="Vaudin M."/>
            <person name="Iartchouk O."/>
            <person name="Epp A."/>
            <person name="Liu F."/>
            <person name="Wollam C."/>
            <person name="Allinger M."/>
            <person name="Doughty D."/>
            <person name="Scott C."/>
            <person name="Lappas C."/>
            <person name="Markelz B."/>
            <person name="Flanagan C."/>
            <person name="Crowell C."/>
            <person name="Gurson J."/>
            <person name="Lomo C."/>
            <person name="Sear C."/>
            <person name="Strub G."/>
            <person name="Cielo C."/>
            <person name="Slater S."/>
        </authorList>
    </citation>
    <scope>NUCLEOTIDE SEQUENCE [LARGE SCALE GENOMIC DNA]</scope>
    <source>
        <strain>C58 / ATCC 33970</strain>
    </source>
</reference>
<organism>
    <name type="scientific">Agrobacterium fabrum (strain C58 / ATCC 33970)</name>
    <name type="common">Agrobacterium tumefaciens (strain C58)</name>
    <dbReference type="NCBI Taxonomy" id="176299"/>
    <lineage>
        <taxon>Bacteria</taxon>
        <taxon>Pseudomonadati</taxon>
        <taxon>Pseudomonadota</taxon>
        <taxon>Alphaproteobacteria</taxon>
        <taxon>Hyphomicrobiales</taxon>
        <taxon>Rhizobiaceae</taxon>
        <taxon>Rhizobium/Agrobacterium group</taxon>
        <taxon>Agrobacterium</taxon>
        <taxon>Agrobacterium tumefaciens complex</taxon>
    </lineage>
</organism>
<evidence type="ECO:0000255" key="1">
    <source>
        <dbReference type="HAMAP-Rule" id="MF_00003"/>
    </source>
</evidence>
<evidence type="ECO:0000256" key="2">
    <source>
        <dbReference type="SAM" id="MobiDB-lite"/>
    </source>
</evidence>
<proteinExistence type="inferred from homology"/>
<protein>
    <recommendedName>
        <fullName evidence="1">Ribosome-binding factor A</fullName>
    </recommendedName>
</protein>
<gene>
    <name evidence="1" type="primary">rbfA</name>
    <name type="ordered locus">Atu0086</name>
    <name type="ORF">AGR_C_129</name>
</gene>
<accession>Q8UJ52</accession>
<sequence length="138" mass="15599">MAKATSSAPSQRMLRVGEQVRAALTQILQRGEVRDDLIEGTVISISEVRMSPDLKIATAYVTPLGVADHTDIISALNRHAKFMRGRLGPQLRQMKYMPELRFRDDTSFDNYQKIDALLRSPEVQRDLGPSNEKDDEQN</sequence>
<comment type="function">
    <text evidence="1">One of several proteins that assist in the late maturation steps of the functional core of the 30S ribosomal subunit. Associates with free 30S ribosomal subunits (but not with 30S subunits that are part of 70S ribosomes or polysomes). Required for efficient processing of 16S rRNA. May interact with the 5'-terminal helix region of 16S rRNA.</text>
</comment>
<comment type="subunit">
    <text evidence="1">Monomer. Binds 30S ribosomal subunits, but not 50S ribosomal subunits or 70S ribosomes.</text>
</comment>
<comment type="subcellular location">
    <subcellularLocation>
        <location evidence="1">Cytoplasm</location>
    </subcellularLocation>
</comment>
<comment type="similarity">
    <text evidence="1">Belongs to the RbfA family.</text>
</comment>
<dbReference type="EMBL" id="AE007869">
    <property type="protein sequence ID" value="AAK85906.1"/>
    <property type="molecule type" value="Genomic_DNA"/>
</dbReference>
<dbReference type="PIR" id="A97369">
    <property type="entry name" value="A97369"/>
</dbReference>
<dbReference type="PIR" id="AI2586">
    <property type="entry name" value="AI2586"/>
</dbReference>
<dbReference type="RefSeq" id="NP_353121.1">
    <property type="nucleotide sequence ID" value="NC_003062.2"/>
</dbReference>
<dbReference type="RefSeq" id="WP_006309910.1">
    <property type="nucleotide sequence ID" value="NC_003062.2"/>
</dbReference>
<dbReference type="SMR" id="Q8UJ52"/>
<dbReference type="STRING" id="176299.Atu0086"/>
<dbReference type="EnsemblBacteria" id="AAK85906">
    <property type="protein sequence ID" value="AAK85906"/>
    <property type="gene ID" value="Atu0086"/>
</dbReference>
<dbReference type="GeneID" id="1132124"/>
<dbReference type="KEGG" id="atu:Atu0086"/>
<dbReference type="PATRIC" id="fig|176299.10.peg.79"/>
<dbReference type="eggNOG" id="COG0858">
    <property type="taxonomic scope" value="Bacteria"/>
</dbReference>
<dbReference type="HOGENOM" id="CLU_089475_1_0_5"/>
<dbReference type="OrthoDB" id="9805051at2"/>
<dbReference type="PhylomeDB" id="Q8UJ52"/>
<dbReference type="BioCyc" id="AGRO:ATU0086-MONOMER"/>
<dbReference type="Proteomes" id="UP000000813">
    <property type="component" value="Chromosome circular"/>
</dbReference>
<dbReference type="GO" id="GO:0005829">
    <property type="term" value="C:cytosol"/>
    <property type="evidence" value="ECO:0007669"/>
    <property type="project" value="TreeGrafter"/>
</dbReference>
<dbReference type="GO" id="GO:0043024">
    <property type="term" value="F:ribosomal small subunit binding"/>
    <property type="evidence" value="ECO:0007669"/>
    <property type="project" value="TreeGrafter"/>
</dbReference>
<dbReference type="GO" id="GO:0030490">
    <property type="term" value="P:maturation of SSU-rRNA"/>
    <property type="evidence" value="ECO:0007669"/>
    <property type="project" value="UniProtKB-UniRule"/>
</dbReference>
<dbReference type="Gene3D" id="3.30.300.20">
    <property type="match status" value="1"/>
</dbReference>
<dbReference type="HAMAP" id="MF_00003">
    <property type="entry name" value="RbfA"/>
    <property type="match status" value="1"/>
</dbReference>
<dbReference type="InterPro" id="IPR015946">
    <property type="entry name" value="KH_dom-like_a/b"/>
</dbReference>
<dbReference type="InterPro" id="IPR000238">
    <property type="entry name" value="RbfA"/>
</dbReference>
<dbReference type="InterPro" id="IPR023799">
    <property type="entry name" value="RbfA_dom_sf"/>
</dbReference>
<dbReference type="InterPro" id="IPR020053">
    <property type="entry name" value="Ribosome-bd_factorA_CS"/>
</dbReference>
<dbReference type="NCBIfam" id="NF001802">
    <property type="entry name" value="PRK00521.2-5"/>
    <property type="match status" value="1"/>
</dbReference>
<dbReference type="NCBIfam" id="TIGR00082">
    <property type="entry name" value="rbfA"/>
    <property type="match status" value="1"/>
</dbReference>
<dbReference type="PANTHER" id="PTHR33515">
    <property type="entry name" value="RIBOSOME-BINDING FACTOR A, CHLOROPLASTIC-RELATED"/>
    <property type="match status" value="1"/>
</dbReference>
<dbReference type="PANTHER" id="PTHR33515:SF1">
    <property type="entry name" value="RIBOSOME-BINDING FACTOR A, CHLOROPLASTIC-RELATED"/>
    <property type="match status" value="1"/>
</dbReference>
<dbReference type="Pfam" id="PF02033">
    <property type="entry name" value="RBFA"/>
    <property type="match status" value="1"/>
</dbReference>
<dbReference type="SUPFAM" id="SSF89919">
    <property type="entry name" value="Ribosome-binding factor A, RbfA"/>
    <property type="match status" value="1"/>
</dbReference>
<dbReference type="PROSITE" id="PS01319">
    <property type="entry name" value="RBFA"/>
    <property type="match status" value="1"/>
</dbReference>
<name>RBFA_AGRFC</name>